<proteinExistence type="evidence at protein level"/>
<feature type="signal peptide" evidence="2">
    <location>
        <begin position="1"/>
        <end position="20"/>
    </location>
</feature>
<feature type="chain" id="PRO_0000017325" description="Low-density lipoprotein receptor-related protein 4">
    <location>
        <begin position="21"/>
        <end position="1905"/>
    </location>
</feature>
<feature type="topological domain" description="Extracellular" evidence="2">
    <location>
        <begin position="21"/>
        <end position="1725"/>
    </location>
</feature>
<feature type="transmembrane region" description="Helical" evidence="2">
    <location>
        <begin position="1726"/>
        <end position="1746"/>
    </location>
</feature>
<feature type="topological domain" description="Cytoplasmic" evidence="2">
    <location>
        <begin position="1747"/>
        <end position="1905"/>
    </location>
</feature>
<feature type="domain" description="LDL-receptor class A 1" evidence="3">
    <location>
        <begin position="26"/>
        <end position="67"/>
    </location>
</feature>
<feature type="domain" description="LDL-receptor class A 2" evidence="3">
    <location>
        <begin position="70"/>
        <end position="106"/>
    </location>
</feature>
<feature type="domain" description="LDL-receptor class A 3" evidence="3">
    <location>
        <begin position="109"/>
        <end position="144"/>
    </location>
</feature>
<feature type="domain" description="LDL-receptor class A 4" evidence="3">
    <location>
        <begin position="147"/>
        <end position="183"/>
    </location>
</feature>
<feature type="domain" description="LDL-receptor class A 5" evidence="3">
    <location>
        <begin position="190"/>
        <end position="226"/>
    </location>
</feature>
<feature type="domain" description="LDL-receptor class A 6" evidence="3">
    <location>
        <begin position="230"/>
        <end position="266"/>
    </location>
</feature>
<feature type="domain" description="LDL-receptor class A 7" evidence="3">
    <location>
        <begin position="269"/>
        <end position="305"/>
    </location>
</feature>
<feature type="domain" description="LDL-receptor class A 8" evidence="3">
    <location>
        <begin position="311"/>
        <end position="350"/>
    </location>
</feature>
<feature type="domain" description="EGF-like 1; calcium-binding" evidence="2">
    <location>
        <begin position="354"/>
        <end position="394"/>
    </location>
</feature>
<feature type="domain" description="EGF-like 2; calcium-binding" evidence="2">
    <location>
        <begin position="395"/>
        <end position="434"/>
    </location>
</feature>
<feature type="repeat" description="LDL-receptor class B 1">
    <location>
        <begin position="480"/>
        <end position="522"/>
    </location>
</feature>
<feature type="repeat" description="LDL-receptor class B 2">
    <location>
        <begin position="523"/>
        <end position="565"/>
    </location>
</feature>
<feature type="repeat" description="LDL-receptor class B 3">
    <location>
        <begin position="566"/>
        <end position="609"/>
    </location>
</feature>
<feature type="repeat" description="LDL-receptor class B 4">
    <location>
        <begin position="610"/>
        <end position="652"/>
    </location>
</feature>
<feature type="repeat" description="LDL-receptor class B 5">
    <location>
        <begin position="653"/>
        <end position="693"/>
    </location>
</feature>
<feature type="domain" description="EGF-like 3">
    <location>
        <begin position="698"/>
        <end position="737"/>
    </location>
</feature>
<feature type="repeat" description="LDL-receptor class B 6">
    <location>
        <begin position="785"/>
        <end position="827"/>
    </location>
</feature>
<feature type="repeat" description="LDL-receptor class B 7">
    <location>
        <begin position="828"/>
        <end position="870"/>
    </location>
</feature>
<feature type="repeat" description="LDL-receptor class B 8">
    <location>
        <begin position="871"/>
        <end position="914"/>
    </location>
</feature>
<feature type="repeat" description="LDL-receptor class B 9">
    <location>
        <begin position="915"/>
        <end position="956"/>
    </location>
</feature>
<feature type="repeat" description="LDL-receptor class B 10">
    <location>
        <begin position="957"/>
        <end position="998"/>
    </location>
</feature>
<feature type="repeat" description="LDL-receptor class B 11">
    <location>
        <begin position="1093"/>
        <end position="1135"/>
    </location>
</feature>
<feature type="repeat" description="LDL-receptor class B 12">
    <location>
        <begin position="1136"/>
        <end position="1178"/>
    </location>
</feature>
<feature type="repeat" description="LDL-receptor class B 13">
    <location>
        <begin position="1179"/>
        <end position="1222"/>
    </location>
</feature>
<feature type="repeat" description="LDL-receptor class B 14">
    <location>
        <begin position="1223"/>
        <end position="1263"/>
    </location>
</feature>
<feature type="repeat" description="LDL-receptor class B 15">
    <location>
        <begin position="1264"/>
        <end position="1306"/>
    </location>
</feature>
<feature type="repeat" description="LDL-receptor class B 16">
    <location>
        <begin position="1397"/>
        <end position="1439"/>
    </location>
</feature>
<feature type="repeat" description="LDL-receptor class B 17">
    <location>
        <begin position="1440"/>
        <end position="1482"/>
    </location>
</feature>
<feature type="repeat" description="LDL-receptor class B 18">
    <location>
        <begin position="1483"/>
        <end position="1526"/>
    </location>
</feature>
<feature type="repeat" description="LDL-receptor class B 19">
    <location>
        <begin position="1527"/>
        <end position="1568"/>
    </location>
</feature>
<feature type="repeat" description="LDL-receptor class B 20">
    <location>
        <begin position="1569"/>
        <end position="1610"/>
    </location>
</feature>
<feature type="region of interest" description="Disordered" evidence="4">
    <location>
        <begin position="1659"/>
        <end position="1686"/>
    </location>
</feature>
<feature type="region of interest" description="Disordered" evidence="4">
    <location>
        <begin position="1852"/>
        <end position="1905"/>
    </location>
</feature>
<feature type="short sequence motif" description="Endocytosis signal" evidence="2">
    <location>
        <begin position="1766"/>
        <end position="1769"/>
    </location>
</feature>
<feature type="compositionally biased region" description="Low complexity" evidence="4">
    <location>
        <begin position="1676"/>
        <end position="1686"/>
    </location>
</feature>
<feature type="compositionally biased region" description="Basic and acidic residues" evidence="4">
    <location>
        <begin position="1882"/>
        <end position="1905"/>
    </location>
</feature>
<feature type="glycosylation site" description="N-linked (GlcNAc...) asparagine" evidence="2">
    <location>
        <position position="264"/>
    </location>
</feature>
<feature type="glycosylation site" description="N-linked (GlcNAc...) asparagine" evidence="2">
    <location>
        <position position="498"/>
    </location>
</feature>
<feature type="glycosylation site" description="N-linked (GlcNAc...) asparagine" evidence="2">
    <location>
        <position position="719"/>
    </location>
</feature>
<feature type="glycosylation site" description="N-linked (GlcNAc...) asparagine" evidence="2">
    <location>
        <position position="901"/>
    </location>
</feature>
<feature type="glycosylation site" description="N-linked (GlcNAc...) asparagine" evidence="2">
    <location>
        <position position="1077"/>
    </location>
</feature>
<feature type="glycosylation site" description="N-linked (GlcNAc...) asparagine" evidence="2">
    <location>
        <position position="1415"/>
    </location>
</feature>
<feature type="glycosylation site" description="N-linked (GlcNAc...) asparagine" evidence="2">
    <location>
        <position position="1467"/>
    </location>
</feature>
<feature type="disulfide bond" evidence="3">
    <location>
        <begin position="27"/>
        <end position="44"/>
    </location>
</feature>
<feature type="disulfide bond" evidence="3">
    <location>
        <begin position="34"/>
        <end position="57"/>
    </location>
</feature>
<feature type="disulfide bond" evidence="3">
    <location>
        <begin position="51"/>
        <end position="66"/>
    </location>
</feature>
<feature type="disulfide bond" evidence="3">
    <location>
        <begin position="71"/>
        <end position="83"/>
    </location>
</feature>
<feature type="disulfide bond" evidence="3">
    <location>
        <begin position="78"/>
        <end position="96"/>
    </location>
</feature>
<feature type="disulfide bond" evidence="3">
    <location>
        <begin position="90"/>
        <end position="105"/>
    </location>
</feature>
<feature type="disulfide bond" evidence="3">
    <location>
        <begin position="110"/>
        <end position="122"/>
    </location>
</feature>
<feature type="disulfide bond" evidence="3">
    <location>
        <begin position="117"/>
        <end position="135"/>
    </location>
</feature>
<feature type="disulfide bond" evidence="3">
    <location>
        <begin position="129"/>
        <end position="143"/>
    </location>
</feature>
<feature type="disulfide bond" evidence="3">
    <location>
        <begin position="148"/>
        <end position="160"/>
    </location>
</feature>
<feature type="disulfide bond" evidence="3">
    <location>
        <begin position="155"/>
        <end position="173"/>
    </location>
</feature>
<feature type="disulfide bond" evidence="3">
    <location>
        <begin position="167"/>
        <end position="182"/>
    </location>
</feature>
<feature type="disulfide bond" evidence="3">
    <location>
        <begin position="191"/>
        <end position="203"/>
    </location>
</feature>
<feature type="disulfide bond" evidence="3">
    <location>
        <begin position="198"/>
        <end position="216"/>
    </location>
</feature>
<feature type="disulfide bond" evidence="3">
    <location>
        <begin position="210"/>
        <end position="225"/>
    </location>
</feature>
<feature type="disulfide bond" evidence="3">
    <location>
        <begin position="231"/>
        <end position="243"/>
    </location>
</feature>
<feature type="disulfide bond" evidence="3">
    <location>
        <begin position="238"/>
        <end position="256"/>
    </location>
</feature>
<feature type="disulfide bond" evidence="3">
    <location>
        <begin position="250"/>
        <end position="265"/>
    </location>
</feature>
<feature type="disulfide bond" evidence="3">
    <location>
        <begin position="270"/>
        <end position="282"/>
    </location>
</feature>
<feature type="disulfide bond" evidence="3">
    <location>
        <begin position="277"/>
        <end position="295"/>
    </location>
</feature>
<feature type="disulfide bond" evidence="3">
    <location>
        <begin position="289"/>
        <end position="304"/>
    </location>
</feature>
<feature type="disulfide bond" evidence="3">
    <location>
        <begin position="312"/>
        <end position="324"/>
    </location>
</feature>
<feature type="disulfide bond" evidence="3">
    <location>
        <begin position="319"/>
        <end position="337"/>
    </location>
</feature>
<feature type="disulfide bond" evidence="3">
    <location>
        <begin position="331"/>
        <end position="349"/>
    </location>
</feature>
<feature type="disulfide bond" evidence="3">
    <location>
        <begin position="358"/>
        <end position="369"/>
    </location>
</feature>
<feature type="disulfide bond" evidence="3">
    <location>
        <begin position="365"/>
        <end position="378"/>
    </location>
</feature>
<feature type="disulfide bond" evidence="3">
    <location>
        <begin position="380"/>
        <end position="393"/>
    </location>
</feature>
<feature type="disulfide bond" evidence="3">
    <location>
        <begin position="399"/>
        <end position="409"/>
    </location>
</feature>
<feature type="disulfide bond" evidence="3">
    <location>
        <begin position="405"/>
        <end position="418"/>
    </location>
</feature>
<feature type="disulfide bond" evidence="3">
    <location>
        <begin position="420"/>
        <end position="433"/>
    </location>
</feature>
<feature type="disulfide bond" evidence="3">
    <location>
        <begin position="702"/>
        <end position="713"/>
    </location>
</feature>
<feature type="disulfide bond" evidence="3">
    <location>
        <begin position="709"/>
        <end position="722"/>
    </location>
</feature>
<feature type="disulfide bond" evidence="3">
    <location>
        <begin position="724"/>
        <end position="736"/>
    </location>
</feature>
<feature type="sequence variant" id="VAR_063776" description="In CLSS; abolishes the antagonistic effect of LRP4 on LRP6-mediated activation of Wnt signaling; dbSNP:rs267607222." evidence="6">
    <original>D</original>
    <variation>N</variation>
    <location>
        <position position="137"/>
    </location>
</feature>
<feature type="sequence variant" id="VAR_063777" description="In CLSS; abolishes the antagonistic effect of LRP4 on LRP6-mediated activation of Wnt signaling; dbSNP:rs267607221." evidence="6">
    <original>C</original>
    <variation>Y</variation>
    <location>
        <position position="160"/>
    </location>
</feature>
<feature type="sequence variant" id="VAR_058290" description="In dbSNP:rs7926667.">
    <original>L</original>
    <variation>S</variation>
    <location>
        <position position="314"/>
    </location>
</feature>
<feature type="sequence variant" id="VAR_063778" description="In CLSS; abolishes the antagonistic effect of LRP4 on LRP6-mediated activation of Wnt signaling; dbSNP:rs267607224." evidence="6">
    <original>D</original>
    <variation>N</variation>
    <location>
        <position position="449"/>
    </location>
</feature>
<feature type="sequence variant" id="VAR_063779" description="In CLSS; dbSNP:rs267607223." evidence="6">
    <original>T</original>
    <variation>P</variation>
    <location>
        <position position="461"/>
    </location>
</feature>
<feature type="sequence variant" id="VAR_063780" description="In CLSS; abolishes the antagonistic effect of LRP4 on LRP6-mediated activation of Wnt signaling." evidence="6">
    <original>L</original>
    <variation>F</variation>
    <location>
        <position position="473"/>
    </location>
</feature>
<feature type="sequence variant" id="VAR_063781" description="In CLSS; abolishes the antagonistic effect of LRP4 on LRP6-mediated activation of Wnt signaling; dbSNP:rs267607220." evidence="6">
    <original>D</original>
    <variation>N</variation>
    <location>
        <position position="529"/>
    </location>
</feature>
<feature type="sequence variant" id="VAR_063782" description="In CLSS; dbSNP:rs2134807022." evidence="6">
    <original>C</original>
    <variation>R</variation>
    <location>
        <position position="1017"/>
    </location>
</feature>
<feature type="sequence variant" id="VAR_057955" description="In dbSNP:rs6485702." evidence="5 9 10">
    <original>I</original>
    <variation>V</variation>
    <location>
        <position position="1086"/>
    </location>
</feature>
<feature type="sequence variant" id="VAR_066630" description="In SOST2; impairs the interaction with SOST; loss of function as facilitator of SOST-mediated inhibition of Wnt signaling; has no effect on AGRN-mediated MUSK signaling; retains the ability to bind AGRN and MUSK; dbSNP:rs387906884." evidence="7 8">
    <original>R</original>
    <variation>W</variation>
    <location>
        <position position="1170"/>
    </location>
</feature>
<feature type="sequence variant" id="VAR_066631" description="In SOST2; impairs the interaction with SOST; loss of function as facilitator of SOST-mediated inhibition of Wnt signaling; has no effect on AGRN-mediated MUSK signaling; retains the ability to bind AGRN and MUSK; dbSNP:rs387906883." evidence="7 8">
    <original>W</original>
    <variation>S</variation>
    <location>
        <position position="1186"/>
    </location>
</feature>
<feature type="sequence variant" id="VAR_058291" description="In dbSNP:rs2306033.">
    <original>A</original>
    <variation>V</variation>
    <location>
        <position position="1203"/>
    </location>
</feature>
<feature type="sequence variant" id="VAR_073695" description="In CMS17; decreases binding affinity for AGRN and MUSK proteins; does not enhance downstream activation of the MUSK signaling pathway thus impairing clustering of AChRs; dbSNP:rs786205153." evidence="8">
    <original>E</original>
    <variation>K</variation>
    <location>
        <position position="1233"/>
    </location>
</feature>
<feature type="sequence variant" id="VAR_058292" description="In dbSNP:rs2306031.">
    <original>A</original>
    <variation>T</variation>
    <location>
        <position position="1238"/>
    </location>
</feature>
<feature type="sequence variant" id="VAR_073696" description="In CMS17; decreases binding affinity for AGRN and MUSK proteins; does not enhance downstream activation of the MUSK signaling pathway thus impairing clustering of AChRs; dbSNP:rs746136135." evidence="8">
    <original>R</original>
    <variation>H</variation>
    <location>
        <position position="1277"/>
    </location>
</feature>
<feature type="sequence variant" id="VAR_057956" description="In dbSNP:rs2306029." evidence="5 9 10">
    <original>S</original>
    <variation>G</variation>
    <location>
        <position position="1554"/>
    </location>
</feature>
<feature type="sequence variant" id="VAR_057957" description="In dbSNP:rs3816614." evidence="5 9 10">
    <original>R</original>
    <variation>Q</variation>
    <location>
        <position position="1646"/>
    </location>
</feature>
<feature type="mutagenesis site" description="Compromises Wnt-suppressive activity." evidence="8">
    <original>N</original>
    <variation>A</variation>
    <location>
        <position position="1214"/>
    </location>
</feature>
<feature type="mutagenesis site" description="Compromises AGRN-mediated up-regulation of MUSK signaling." evidence="8">
    <original>V</original>
    <variation>A</variation>
    <location>
        <position position="1252"/>
    </location>
</feature>
<feature type="mutagenesis site" description="Compromises Wnt-suppressive activity." evidence="8">
    <original>Y</original>
    <variation>A</variation>
    <location>
        <position position="1256"/>
    </location>
</feature>
<feature type="mutagenesis site" description="Compromises AGRN-mediated up-regulation of MUSK signaling." evidence="8">
    <original>I</original>
    <variation>A</variation>
    <location>
        <position position="1287"/>
    </location>
</feature>
<feature type="sequence conflict" description="In Ref. 2; BAE19679." evidence="11" ref="2">
    <original>EPRA</original>
    <variation>D</variation>
    <location>
        <begin position="1472"/>
        <end position="1475"/>
    </location>
</feature>
<feature type="sequence conflict" description="In Ref. 2; BAE19679." evidence="11" ref="2">
    <original>V</original>
    <variation>A</variation>
    <location>
        <position position="1478"/>
    </location>
</feature>
<feature type="sequence conflict" description="In Ref. 1; BAD83615 and 2; BAA32468." evidence="11" ref="1 2">
    <original>T</original>
    <variation>M</variation>
    <location>
        <position position="1862"/>
    </location>
</feature>
<dbReference type="EMBL" id="AB084910">
    <property type="protein sequence ID" value="BAD83615.1"/>
    <property type="molecule type" value="mRNA"/>
</dbReference>
<dbReference type="EMBL" id="AB011540">
    <property type="protein sequence ID" value="BAA32468.1"/>
    <property type="molecule type" value="mRNA"/>
</dbReference>
<dbReference type="EMBL" id="AB231861">
    <property type="protein sequence ID" value="BAE19679.1"/>
    <property type="status" value="ALT_INIT"/>
    <property type="molecule type" value="mRNA"/>
</dbReference>
<dbReference type="EMBL" id="AC021573">
    <property type="status" value="NOT_ANNOTATED_CDS"/>
    <property type="molecule type" value="Genomic_DNA"/>
</dbReference>
<dbReference type="EMBL" id="BC037360">
    <property type="protein sequence ID" value="AAH37360.1"/>
    <property type="molecule type" value="mRNA"/>
</dbReference>
<dbReference type="EMBL" id="BC041048">
    <property type="protein sequence ID" value="AAH41048.1"/>
    <property type="molecule type" value="mRNA"/>
</dbReference>
<dbReference type="EMBL" id="BC136667">
    <property type="protein sequence ID" value="AAI36668.1"/>
    <property type="molecule type" value="mRNA"/>
</dbReference>
<dbReference type="EMBL" id="BC136668">
    <property type="protein sequence ID" value="AAI36669.1"/>
    <property type="molecule type" value="mRNA"/>
</dbReference>
<dbReference type="CCDS" id="CCDS31478.1"/>
<dbReference type="RefSeq" id="NP_002325.2">
    <property type="nucleotide sequence ID" value="NM_002334.4"/>
</dbReference>
<dbReference type="PDB" id="8S9P">
    <property type="method" value="EM"/>
    <property type="resolution" value="3.80 A"/>
    <property type="chains" value="B=1-1905"/>
</dbReference>
<dbReference type="PDBsum" id="8S9P"/>
<dbReference type="EMDB" id="EMD-40241"/>
<dbReference type="SMR" id="O75096"/>
<dbReference type="BioGRID" id="110218">
    <property type="interactions" value="90"/>
</dbReference>
<dbReference type="CORUM" id="O75096"/>
<dbReference type="FunCoup" id="O75096">
    <property type="interactions" value="785"/>
</dbReference>
<dbReference type="IntAct" id="O75096">
    <property type="interactions" value="136"/>
</dbReference>
<dbReference type="MINT" id="O75096"/>
<dbReference type="STRING" id="9606.ENSP00000367888"/>
<dbReference type="TCDB" id="9.B.87.1.24">
    <property type="family name" value="the selenoprotein p receptor (selp-receptor) family"/>
</dbReference>
<dbReference type="GlyCosmos" id="O75096">
    <property type="glycosylation" value="10 sites, 2 glycans"/>
</dbReference>
<dbReference type="GlyGen" id="O75096">
    <property type="glycosylation" value="16 sites, 4 N-linked glycans (5 sites), 3 O-linked glycans (6 sites)"/>
</dbReference>
<dbReference type="iPTMnet" id="O75096"/>
<dbReference type="PhosphoSitePlus" id="O75096"/>
<dbReference type="BioMuta" id="LRP4"/>
<dbReference type="jPOST" id="O75096"/>
<dbReference type="MassIVE" id="O75096"/>
<dbReference type="PaxDb" id="9606-ENSP00000367888"/>
<dbReference type="PeptideAtlas" id="O75096"/>
<dbReference type="ProteomicsDB" id="49760"/>
<dbReference type="Pumba" id="O75096"/>
<dbReference type="TopDownProteomics" id="O75096"/>
<dbReference type="Antibodypedia" id="1985">
    <property type="antibodies" value="332 antibodies from 37 providers"/>
</dbReference>
<dbReference type="DNASU" id="4038"/>
<dbReference type="Ensembl" id="ENST00000378623.6">
    <property type="protein sequence ID" value="ENSP00000367888.1"/>
    <property type="gene ID" value="ENSG00000134569.10"/>
</dbReference>
<dbReference type="GeneID" id="4038"/>
<dbReference type="KEGG" id="hsa:4038"/>
<dbReference type="MANE-Select" id="ENST00000378623.6">
    <property type="protein sequence ID" value="ENSP00000367888.1"/>
    <property type="RefSeq nucleotide sequence ID" value="NM_002334.4"/>
    <property type="RefSeq protein sequence ID" value="NP_002325.2"/>
</dbReference>
<dbReference type="UCSC" id="uc001ndn.5">
    <property type="organism name" value="human"/>
</dbReference>
<dbReference type="AGR" id="HGNC:6696"/>
<dbReference type="CTD" id="4038"/>
<dbReference type="DisGeNET" id="4038"/>
<dbReference type="GeneCards" id="LRP4"/>
<dbReference type="GeneReviews" id="LRP4"/>
<dbReference type="HGNC" id="HGNC:6696">
    <property type="gene designation" value="LRP4"/>
</dbReference>
<dbReference type="HPA" id="ENSG00000134569">
    <property type="expression patterns" value="Tissue enhanced (brain, skin)"/>
</dbReference>
<dbReference type="MalaCards" id="LRP4"/>
<dbReference type="MIM" id="212780">
    <property type="type" value="phenotype"/>
</dbReference>
<dbReference type="MIM" id="604270">
    <property type="type" value="gene"/>
</dbReference>
<dbReference type="MIM" id="614305">
    <property type="type" value="phenotype"/>
</dbReference>
<dbReference type="MIM" id="616304">
    <property type="type" value="phenotype"/>
</dbReference>
<dbReference type="neXtProt" id="NX_O75096"/>
<dbReference type="OpenTargets" id="ENSG00000134569"/>
<dbReference type="Orphanet" id="3258">
    <property type="disease" value="Cenani-Lenz syndrome"/>
</dbReference>
<dbReference type="Orphanet" id="98913">
    <property type="disease" value="Postsynaptic congenital myasthenic syndromes"/>
</dbReference>
<dbReference type="Orphanet" id="3152">
    <property type="disease" value="Sclerosteosis"/>
</dbReference>
<dbReference type="PharmGKB" id="PA30454"/>
<dbReference type="VEuPathDB" id="HostDB:ENSG00000134569"/>
<dbReference type="eggNOG" id="KOG1215">
    <property type="taxonomic scope" value="Eukaryota"/>
</dbReference>
<dbReference type="GeneTree" id="ENSGT00940000158287"/>
<dbReference type="HOGENOM" id="CLU_000085_4_1_1"/>
<dbReference type="InParanoid" id="O75096"/>
<dbReference type="OMA" id="NNRYTAI"/>
<dbReference type="OrthoDB" id="664115at2759"/>
<dbReference type="PAN-GO" id="O75096">
    <property type="GO annotations" value="4 GO annotations based on evolutionary models"/>
</dbReference>
<dbReference type="PhylomeDB" id="O75096"/>
<dbReference type="TreeFam" id="TF315253"/>
<dbReference type="PathwayCommons" id="O75096"/>
<dbReference type="Reactome" id="R-HSA-3000178">
    <property type="pathway name" value="ECM proteoglycans"/>
</dbReference>
<dbReference type="SignaLink" id="O75096"/>
<dbReference type="SIGNOR" id="O75096"/>
<dbReference type="BioGRID-ORCS" id="4038">
    <property type="hits" value="15 hits in 1146 CRISPR screens"/>
</dbReference>
<dbReference type="ChiTaRS" id="LRP4">
    <property type="organism name" value="human"/>
</dbReference>
<dbReference type="GeneWiki" id="Low_density_lipoprotein_receptor-related_protein_4"/>
<dbReference type="GenomeRNAi" id="4038"/>
<dbReference type="Pharos" id="O75096">
    <property type="development level" value="Tbio"/>
</dbReference>
<dbReference type="PRO" id="PR:O75096"/>
<dbReference type="Proteomes" id="UP000005640">
    <property type="component" value="Chromosome 11"/>
</dbReference>
<dbReference type="RNAct" id="O75096">
    <property type="molecule type" value="protein"/>
</dbReference>
<dbReference type="Bgee" id="ENSG00000134569">
    <property type="expression patterns" value="Expressed in ventricular zone and 163 other cell types or tissues"/>
</dbReference>
<dbReference type="ExpressionAtlas" id="O75096">
    <property type="expression patterns" value="baseline and differential"/>
</dbReference>
<dbReference type="GO" id="GO:0009986">
    <property type="term" value="C:cell surface"/>
    <property type="evidence" value="ECO:0000314"/>
    <property type="project" value="UniProtKB"/>
</dbReference>
<dbReference type="GO" id="GO:0030425">
    <property type="term" value="C:dendrite"/>
    <property type="evidence" value="ECO:0000250"/>
    <property type="project" value="UniProtKB"/>
</dbReference>
<dbReference type="GO" id="GO:0031594">
    <property type="term" value="C:neuromuscular junction"/>
    <property type="evidence" value="ECO:0000250"/>
    <property type="project" value="UniProtKB"/>
</dbReference>
<dbReference type="GO" id="GO:0043025">
    <property type="term" value="C:neuronal cell body"/>
    <property type="evidence" value="ECO:0000250"/>
    <property type="project" value="UniProtKB"/>
</dbReference>
<dbReference type="GO" id="GO:0005886">
    <property type="term" value="C:plasma membrane"/>
    <property type="evidence" value="ECO:0000250"/>
    <property type="project" value="UniProtKB"/>
</dbReference>
<dbReference type="GO" id="GO:0044853">
    <property type="term" value="C:plasma membrane raft"/>
    <property type="evidence" value="ECO:0000250"/>
    <property type="project" value="UniProtKB"/>
</dbReference>
<dbReference type="GO" id="GO:0014069">
    <property type="term" value="C:postsynaptic density"/>
    <property type="evidence" value="ECO:0000250"/>
    <property type="project" value="UniProtKB"/>
</dbReference>
<dbReference type="GO" id="GO:0097060">
    <property type="term" value="C:synaptic membrane"/>
    <property type="evidence" value="ECO:0000250"/>
    <property type="project" value="UniProtKB"/>
</dbReference>
<dbReference type="GO" id="GO:0034185">
    <property type="term" value="F:apolipoprotein binding"/>
    <property type="evidence" value="ECO:0007669"/>
    <property type="project" value="Ensembl"/>
</dbReference>
<dbReference type="GO" id="GO:0005509">
    <property type="term" value="F:calcium ion binding"/>
    <property type="evidence" value="ECO:0007669"/>
    <property type="project" value="InterPro"/>
</dbReference>
<dbReference type="GO" id="GO:0015026">
    <property type="term" value="F:coreceptor activity"/>
    <property type="evidence" value="ECO:0007669"/>
    <property type="project" value="Ensembl"/>
</dbReference>
<dbReference type="GO" id="GO:0042803">
    <property type="term" value="F:protein homodimerization activity"/>
    <property type="evidence" value="ECO:0007669"/>
    <property type="project" value="Ensembl"/>
</dbReference>
<dbReference type="GO" id="GO:0030971">
    <property type="term" value="F:receptor tyrosine kinase binding"/>
    <property type="evidence" value="ECO:0000250"/>
    <property type="project" value="UniProtKB"/>
</dbReference>
<dbReference type="GO" id="GO:0097110">
    <property type="term" value="F:scaffold protein binding"/>
    <property type="evidence" value="ECO:0000250"/>
    <property type="project" value="UniProtKB"/>
</dbReference>
<dbReference type="GO" id="GO:0150094">
    <property type="term" value="P:amyloid-beta clearance by cellular catabolic process"/>
    <property type="evidence" value="ECO:0000315"/>
    <property type="project" value="ARUK-UCL"/>
</dbReference>
<dbReference type="GO" id="GO:0048813">
    <property type="term" value="P:dendrite morphogenesis"/>
    <property type="evidence" value="ECO:0000250"/>
    <property type="project" value="UniProtKB"/>
</dbReference>
<dbReference type="GO" id="GO:0009953">
    <property type="term" value="P:dorsal/ventral pattern formation"/>
    <property type="evidence" value="ECO:0007669"/>
    <property type="project" value="Ensembl"/>
</dbReference>
<dbReference type="GO" id="GO:0042733">
    <property type="term" value="P:embryonic digit morphogenesis"/>
    <property type="evidence" value="ECO:0007669"/>
    <property type="project" value="Ensembl"/>
</dbReference>
<dbReference type="GO" id="GO:0006897">
    <property type="term" value="P:endocytosis"/>
    <property type="evidence" value="ECO:0007669"/>
    <property type="project" value="UniProtKB-KW"/>
</dbReference>
<dbReference type="GO" id="GO:0007167">
    <property type="term" value="P:enzyme-linked receptor protein signaling pathway"/>
    <property type="evidence" value="ECO:0007669"/>
    <property type="project" value="Ensembl"/>
</dbReference>
<dbReference type="GO" id="GO:0048699">
    <property type="term" value="P:generation of neurons"/>
    <property type="evidence" value="ECO:0000318"/>
    <property type="project" value="GO_Central"/>
</dbReference>
<dbReference type="GO" id="GO:0001942">
    <property type="term" value="P:hair follicle development"/>
    <property type="evidence" value="ECO:0007669"/>
    <property type="project" value="Ensembl"/>
</dbReference>
<dbReference type="GO" id="GO:0001822">
    <property type="term" value="P:kidney development"/>
    <property type="evidence" value="ECO:0000314"/>
    <property type="project" value="UniProtKB"/>
</dbReference>
<dbReference type="GO" id="GO:0060173">
    <property type="term" value="P:limb development"/>
    <property type="evidence" value="ECO:0000314"/>
    <property type="project" value="UniProtKB"/>
</dbReference>
<dbReference type="GO" id="GO:0050771">
    <property type="term" value="P:negative regulation of axonogenesis"/>
    <property type="evidence" value="ECO:0000250"/>
    <property type="project" value="UniProtKB"/>
</dbReference>
<dbReference type="GO" id="GO:0090090">
    <property type="term" value="P:negative regulation of canonical Wnt signaling pathway"/>
    <property type="evidence" value="ECO:0000314"/>
    <property type="project" value="BHF-UCL"/>
</dbReference>
<dbReference type="GO" id="GO:0030279">
    <property type="term" value="P:negative regulation of ossification"/>
    <property type="evidence" value="ECO:0000315"/>
    <property type="project" value="UniProtKB"/>
</dbReference>
<dbReference type="GO" id="GO:0042475">
    <property type="term" value="P:odontogenesis of dentin-containing tooth"/>
    <property type="evidence" value="ECO:0007669"/>
    <property type="project" value="Ensembl"/>
</dbReference>
<dbReference type="GO" id="GO:1901631">
    <property type="term" value="P:positive regulation of presynaptic membrane organization"/>
    <property type="evidence" value="ECO:0000250"/>
    <property type="project" value="UniProtKB"/>
</dbReference>
<dbReference type="GO" id="GO:0035022">
    <property type="term" value="P:positive regulation of Rac protein signal transduction"/>
    <property type="evidence" value="ECO:0007669"/>
    <property type="project" value="Ensembl"/>
</dbReference>
<dbReference type="GO" id="GO:1904395">
    <property type="term" value="P:positive regulation of skeletal muscle acetylcholine-gated channel clustering"/>
    <property type="evidence" value="ECO:0007669"/>
    <property type="project" value="Ensembl"/>
</dbReference>
<dbReference type="GO" id="GO:0097104">
    <property type="term" value="P:postsynaptic membrane assembly"/>
    <property type="evidence" value="ECO:0000250"/>
    <property type="project" value="UniProtKB"/>
</dbReference>
<dbReference type="GO" id="GO:0097105">
    <property type="term" value="P:presynaptic membrane assembly"/>
    <property type="evidence" value="ECO:0000250"/>
    <property type="project" value="UniProtKB"/>
</dbReference>
<dbReference type="GO" id="GO:0009954">
    <property type="term" value="P:proximal/distal pattern formation"/>
    <property type="evidence" value="ECO:0007669"/>
    <property type="project" value="Ensembl"/>
</dbReference>
<dbReference type="GO" id="GO:0150052">
    <property type="term" value="P:regulation of postsynapse assembly"/>
    <property type="evidence" value="ECO:0007669"/>
    <property type="project" value="Ensembl"/>
</dbReference>
<dbReference type="GO" id="GO:0071340">
    <property type="term" value="P:skeletal muscle acetylcholine-gated channel clustering"/>
    <property type="evidence" value="ECO:0000250"/>
    <property type="project" value="UniProtKB"/>
</dbReference>
<dbReference type="GO" id="GO:0050808">
    <property type="term" value="P:synapse organization"/>
    <property type="evidence" value="ECO:0000250"/>
    <property type="project" value="UniProtKB"/>
</dbReference>
<dbReference type="GO" id="GO:0051124">
    <property type="term" value="P:synaptic assembly at neuromuscular junction"/>
    <property type="evidence" value="ECO:0000250"/>
    <property type="project" value="UniProtKB"/>
</dbReference>
<dbReference type="GO" id="GO:0016055">
    <property type="term" value="P:Wnt signaling pathway"/>
    <property type="evidence" value="ECO:0007669"/>
    <property type="project" value="UniProtKB-KW"/>
</dbReference>
<dbReference type="CDD" id="cd00054">
    <property type="entry name" value="EGF_CA"/>
    <property type="match status" value="1"/>
</dbReference>
<dbReference type="CDD" id="cd00112">
    <property type="entry name" value="LDLa"/>
    <property type="match status" value="7"/>
</dbReference>
<dbReference type="FunFam" id="2.120.10.30:FF:000029">
    <property type="entry name" value="LDL receptor related protein 4"/>
    <property type="match status" value="1"/>
</dbReference>
<dbReference type="FunFam" id="4.10.400.10:FF:000017">
    <property type="entry name" value="LDL receptor related protein 4"/>
    <property type="match status" value="2"/>
</dbReference>
<dbReference type="FunFam" id="4.10.400.10:FF:000092">
    <property type="entry name" value="LDL receptor related protein 4"/>
    <property type="match status" value="1"/>
</dbReference>
<dbReference type="FunFam" id="2.10.25.10:FF:000009">
    <property type="entry name" value="Low-density lipoprotein receptor isoform 1"/>
    <property type="match status" value="1"/>
</dbReference>
<dbReference type="FunFam" id="4.10.400.10:FF:000009">
    <property type="entry name" value="Low-density lipoprotein receptor-related protein 1"/>
    <property type="match status" value="1"/>
</dbReference>
<dbReference type="FunFam" id="2.120.10.30:FF:000008">
    <property type="entry name" value="Low-density lipoprotein receptor-related protein 4"/>
    <property type="match status" value="3"/>
</dbReference>
<dbReference type="FunFam" id="4.10.400.10:FF:000085">
    <property type="entry name" value="low-density lipoprotein receptor-related protein 4"/>
    <property type="match status" value="1"/>
</dbReference>
<dbReference type="FunFam" id="4.10.400.10:FF:000098">
    <property type="entry name" value="low-density lipoprotein receptor-related protein 4"/>
    <property type="match status" value="1"/>
</dbReference>
<dbReference type="FunFam" id="4.10.400.10:FF:000006">
    <property type="entry name" value="Putative low-density lipoprotein receptor"/>
    <property type="match status" value="2"/>
</dbReference>
<dbReference type="Gene3D" id="2.10.25.10">
    <property type="entry name" value="Laminin"/>
    <property type="match status" value="2"/>
</dbReference>
<dbReference type="Gene3D" id="4.10.400.10">
    <property type="entry name" value="Low-density Lipoprotein Receptor"/>
    <property type="match status" value="8"/>
</dbReference>
<dbReference type="Gene3D" id="2.120.10.30">
    <property type="entry name" value="TolB, C-terminal domain"/>
    <property type="match status" value="4"/>
</dbReference>
<dbReference type="InterPro" id="IPR011042">
    <property type="entry name" value="6-blade_b-propeller_TolB-like"/>
</dbReference>
<dbReference type="InterPro" id="IPR026823">
    <property type="entry name" value="cEGF"/>
</dbReference>
<dbReference type="InterPro" id="IPR001881">
    <property type="entry name" value="EGF-like_Ca-bd_dom"/>
</dbReference>
<dbReference type="InterPro" id="IPR000742">
    <property type="entry name" value="EGF-like_dom"/>
</dbReference>
<dbReference type="InterPro" id="IPR018097">
    <property type="entry name" value="EGF_Ca-bd_CS"/>
</dbReference>
<dbReference type="InterPro" id="IPR009030">
    <property type="entry name" value="Growth_fac_rcpt_cys_sf"/>
</dbReference>
<dbReference type="InterPro" id="IPR036055">
    <property type="entry name" value="LDL_receptor-like_sf"/>
</dbReference>
<dbReference type="InterPro" id="IPR051221">
    <property type="entry name" value="LDLR-related"/>
</dbReference>
<dbReference type="InterPro" id="IPR023415">
    <property type="entry name" value="LDLR_class-A_CS"/>
</dbReference>
<dbReference type="InterPro" id="IPR000033">
    <property type="entry name" value="LDLR_classB_rpt"/>
</dbReference>
<dbReference type="InterPro" id="IPR002172">
    <property type="entry name" value="LDrepeatLR_classA_rpt"/>
</dbReference>
<dbReference type="PANTHER" id="PTHR22722:SF15">
    <property type="entry name" value="LOW-DENSITY LIPOPROTEIN RECEPTOR-RELATED"/>
    <property type="match status" value="1"/>
</dbReference>
<dbReference type="PANTHER" id="PTHR22722">
    <property type="entry name" value="LOW-DENSITY LIPOPROTEIN RECEPTOR-RELATED PROTEIN 2-RELATED"/>
    <property type="match status" value="1"/>
</dbReference>
<dbReference type="Pfam" id="PF12662">
    <property type="entry name" value="cEGF"/>
    <property type="match status" value="1"/>
</dbReference>
<dbReference type="Pfam" id="PF14670">
    <property type="entry name" value="FXa_inhibition"/>
    <property type="match status" value="2"/>
</dbReference>
<dbReference type="Pfam" id="PF00057">
    <property type="entry name" value="Ldl_recept_a"/>
    <property type="match status" value="8"/>
</dbReference>
<dbReference type="Pfam" id="PF00058">
    <property type="entry name" value="Ldl_recept_b"/>
    <property type="match status" value="16"/>
</dbReference>
<dbReference type="PRINTS" id="PR00261">
    <property type="entry name" value="LDLRECEPTOR"/>
</dbReference>
<dbReference type="SMART" id="SM00181">
    <property type="entry name" value="EGF"/>
    <property type="match status" value="7"/>
</dbReference>
<dbReference type="SMART" id="SM00179">
    <property type="entry name" value="EGF_CA"/>
    <property type="match status" value="3"/>
</dbReference>
<dbReference type="SMART" id="SM00192">
    <property type="entry name" value="LDLa"/>
    <property type="match status" value="8"/>
</dbReference>
<dbReference type="SMART" id="SM00135">
    <property type="entry name" value="LY"/>
    <property type="match status" value="20"/>
</dbReference>
<dbReference type="SUPFAM" id="SSF57196">
    <property type="entry name" value="EGF/Laminin"/>
    <property type="match status" value="2"/>
</dbReference>
<dbReference type="SUPFAM" id="SSF57184">
    <property type="entry name" value="Growth factor receptor domain"/>
    <property type="match status" value="1"/>
</dbReference>
<dbReference type="SUPFAM" id="SSF57424">
    <property type="entry name" value="LDL receptor-like module"/>
    <property type="match status" value="8"/>
</dbReference>
<dbReference type="SUPFAM" id="SSF63825">
    <property type="entry name" value="YWTD domain"/>
    <property type="match status" value="4"/>
</dbReference>
<dbReference type="PROSITE" id="PS00010">
    <property type="entry name" value="ASX_HYDROXYL"/>
    <property type="match status" value="1"/>
</dbReference>
<dbReference type="PROSITE" id="PS01186">
    <property type="entry name" value="EGF_2"/>
    <property type="match status" value="3"/>
</dbReference>
<dbReference type="PROSITE" id="PS01187">
    <property type="entry name" value="EGF_CA"/>
    <property type="match status" value="1"/>
</dbReference>
<dbReference type="PROSITE" id="PS01209">
    <property type="entry name" value="LDLRA_1"/>
    <property type="match status" value="8"/>
</dbReference>
<dbReference type="PROSITE" id="PS50068">
    <property type="entry name" value="LDLRA_2"/>
    <property type="match status" value="8"/>
</dbReference>
<dbReference type="PROSITE" id="PS51120">
    <property type="entry name" value="LDLRB"/>
    <property type="match status" value="20"/>
</dbReference>
<keyword id="KW-0002">3D-structure</keyword>
<keyword id="KW-0106">Calcium</keyword>
<keyword id="KW-1003">Cell membrane</keyword>
<keyword id="KW-1004">Congenital myasthenic syndrome</keyword>
<keyword id="KW-0217">Developmental protein</keyword>
<keyword id="KW-0221">Differentiation</keyword>
<keyword id="KW-0225">Disease variant</keyword>
<keyword id="KW-1015">Disulfide bond</keyword>
<keyword id="KW-0245">EGF-like domain</keyword>
<keyword id="KW-0254">Endocytosis</keyword>
<keyword id="KW-0325">Glycoprotein</keyword>
<keyword id="KW-0472">Membrane</keyword>
<keyword id="KW-1267">Proteomics identification</keyword>
<keyword id="KW-0675">Receptor</keyword>
<keyword id="KW-1185">Reference proteome</keyword>
<keyword id="KW-0677">Repeat</keyword>
<keyword id="KW-0732">Signal</keyword>
<keyword id="KW-0812">Transmembrane</keyword>
<keyword id="KW-1133">Transmembrane helix</keyword>
<keyword id="KW-0879">Wnt signaling pathway</keyword>
<protein>
    <recommendedName>
        <fullName>Low-density lipoprotein receptor-related protein 4</fullName>
        <shortName>LRP-4</shortName>
    </recommendedName>
    <alternativeName>
        <fullName>Multiple epidermal growth factor-like domains 7</fullName>
    </alternativeName>
</protein>
<accession>O75096</accession>
<accession>B2RN39</accession>
<accession>Q4AC85</accession>
<accession>Q5KTZ5</accession>
<evidence type="ECO:0000250" key="1">
    <source>
        <dbReference type="UniProtKB" id="Q8VI56"/>
    </source>
</evidence>
<evidence type="ECO:0000255" key="2"/>
<evidence type="ECO:0000255" key="3">
    <source>
        <dbReference type="PROSITE-ProRule" id="PRU00124"/>
    </source>
</evidence>
<evidence type="ECO:0000256" key="4">
    <source>
        <dbReference type="SAM" id="MobiDB-lite"/>
    </source>
</evidence>
<evidence type="ECO:0000269" key="5">
    <source>
    </source>
</evidence>
<evidence type="ECO:0000269" key="6">
    <source>
    </source>
</evidence>
<evidence type="ECO:0000269" key="7">
    <source>
    </source>
</evidence>
<evidence type="ECO:0000269" key="8">
    <source>
    </source>
</evidence>
<evidence type="ECO:0000269" key="9">
    <source>
    </source>
</evidence>
<evidence type="ECO:0000269" key="10">
    <source ref="1"/>
</evidence>
<evidence type="ECO:0000305" key="11"/>
<organism>
    <name type="scientific">Homo sapiens</name>
    <name type="common">Human</name>
    <dbReference type="NCBI Taxonomy" id="9606"/>
    <lineage>
        <taxon>Eukaryota</taxon>
        <taxon>Metazoa</taxon>
        <taxon>Chordata</taxon>
        <taxon>Craniata</taxon>
        <taxon>Vertebrata</taxon>
        <taxon>Euteleostomi</taxon>
        <taxon>Mammalia</taxon>
        <taxon>Eutheria</taxon>
        <taxon>Euarchontoglires</taxon>
        <taxon>Primates</taxon>
        <taxon>Haplorrhini</taxon>
        <taxon>Catarrhini</taxon>
        <taxon>Hominidae</taxon>
        <taxon>Homo</taxon>
    </lineage>
</organism>
<gene>
    <name type="primary">LRP4</name>
    <name type="synonym">KIAA0816</name>
    <name type="synonym">LRP10</name>
    <name type="synonym">MEGF7</name>
</gene>
<name>LRP4_HUMAN</name>
<reference key="1">
    <citation type="submission" date="2002-05" db="EMBL/GenBank/DDBJ databases">
        <title>Low density lipoprotein receptor-related protein 10.</title>
        <authorList>
            <person name="Ishikawa K."/>
            <person name="Fujimoto H."/>
            <person name="Kim D."/>
            <person name="Saeki S."/>
        </authorList>
    </citation>
    <scope>NUCLEOTIDE SEQUENCE [MRNA]</scope>
    <scope>VARIANTS VAL-1086; GLY-1554 AND GLN-1646</scope>
    <source>
        <tissue>Brain</tissue>
    </source>
</reference>
<reference key="2">
    <citation type="journal article" date="1998" name="Genomics">
        <title>Identification of high-molecular-weight proteins with multiple EGF-like motifs by motif-trap screening.</title>
        <authorList>
            <person name="Nakayama M."/>
            <person name="Nakajima D."/>
            <person name="Nagase T."/>
            <person name="Nomura N."/>
            <person name="Seki N."/>
            <person name="Ohara O."/>
        </authorList>
    </citation>
    <scope>NUCLEOTIDE SEQUENCE [LARGE SCALE MRNA]</scope>
    <scope>VARIANTS VAL-1086; GLY-1554 AND GLN-1646</scope>
    <source>
        <tissue>Brain</tissue>
    </source>
</reference>
<reference key="3">
    <citation type="journal article" date="2006" name="Nature">
        <title>Human chromosome 11 DNA sequence and analysis including novel gene identification.</title>
        <authorList>
            <person name="Taylor T.D."/>
            <person name="Noguchi H."/>
            <person name="Totoki Y."/>
            <person name="Toyoda A."/>
            <person name="Kuroki Y."/>
            <person name="Dewar K."/>
            <person name="Lloyd C."/>
            <person name="Itoh T."/>
            <person name="Takeda T."/>
            <person name="Kim D.-W."/>
            <person name="She X."/>
            <person name="Barlow K.F."/>
            <person name="Bloom T."/>
            <person name="Bruford E."/>
            <person name="Chang J.L."/>
            <person name="Cuomo C.A."/>
            <person name="Eichler E."/>
            <person name="FitzGerald M.G."/>
            <person name="Jaffe D.B."/>
            <person name="LaButti K."/>
            <person name="Nicol R."/>
            <person name="Park H.-S."/>
            <person name="Seaman C."/>
            <person name="Sougnez C."/>
            <person name="Yang X."/>
            <person name="Zimmer A.R."/>
            <person name="Zody M.C."/>
            <person name="Birren B.W."/>
            <person name="Nusbaum C."/>
            <person name="Fujiyama A."/>
            <person name="Hattori M."/>
            <person name="Rogers J."/>
            <person name="Lander E.S."/>
            <person name="Sakaki Y."/>
        </authorList>
    </citation>
    <scope>NUCLEOTIDE SEQUENCE [LARGE SCALE GENOMIC DNA]</scope>
</reference>
<reference key="4">
    <citation type="journal article" date="2004" name="Genome Res.">
        <title>The status, quality, and expansion of the NIH full-length cDNA project: the Mammalian Gene Collection (MGC).</title>
        <authorList>
            <consortium name="The MGC Project Team"/>
        </authorList>
    </citation>
    <scope>NUCLEOTIDE SEQUENCE [LARGE SCALE MRNA]</scope>
    <scope>VARIANTS VAL-1086; GLY-1554 AND GLN-1646</scope>
    <source>
        <tissue>Muscle</tissue>
    </source>
</reference>
<reference key="5">
    <citation type="journal article" date="2010" name="Am. J. Hum. Genet.">
        <title>LRP4 mutations alter Wnt/beta-catenin signaling and cause limb and kidney malformations in Cenani-Lenz syndrome.</title>
        <authorList>
            <person name="Li Y."/>
            <person name="Pawlik B."/>
            <person name="Elcioglu N."/>
            <person name="Aglan M."/>
            <person name="Kayserili H."/>
            <person name="Yigit G."/>
            <person name="Percin F."/>
            <person name="Goodman F."/>
            <person name="Nurnberg G."/>
            <person name="Cenani A."/>
            <person name="Urquhart J."/>
            <person name="Chung B.D."/>
            <person name="Ismail S."/>
            <person name="Amr K."/>
            <person name="Aslanger A.D."/>
            <person name="Becker C."/>
            <person name="Netzer C."/>
            <person name="Scambler P."/>
            <person name="Eyaid W."/>
            <person name="Hamamy H."/>
            <person name="Clayton-Smith J."/>
            <person name="Hennekam R."/>
            <person name="Nurnberg P."/>
            <person name="Herz J."/>
            <person name="Temtamy S.A."/>
            <person name="Wollnik B."/>
        </authorList>
    </citation>
    <scope>FUNCTION IN THE REGULATION OF CANONICAL WTN SIGNALING</scope>
    <scope>VARIANTS CLSS ASN-137; TYR-160; ASN-449; PRO-461; PHE-473; ASN-529 AND ARG-1017</scope>
    <scope>CHARACTERIZATION OF VARIANTS CLSS ASN-137; TYR-160; ASN-449; PHE-473 AND ASN-529</scope>
</reference>
<reference key="6">
    <citation type="journal article" date="2011" name="J. Biol. Chem.">
        <title>Bone overgrowth-associated mutations in the LRP4 gene impair sclerostin facilitator function.</title>
        <authorList>
            <person name="Leupin O."/>
            <person name="Piters E."/>
            <person name="Halleux C."/>
            <person name="Hu S."/>
            <person name="Kramer I."/>
            <person name="Morvan F."/>
            <person name="Bouwmeester T."/>
            <person name="Schirle M."/>
            <person name="Bueno-Lozano M."/>
            <person name="Fuentes F.J."/>
            <person name="Itin P.H."/>
            <person name="Boudin E."/>
            <person name="de Freitas F."/>
            <person name="Jennes K."/>
            <person name="Brannetti B."/>
            <person name="Charara N."/>
            <person name="Ebersbach H."/>
            <person name="Geisse S."/>
            <person name="Lu C.X."/>
            <person name="Bauer A."/>
            <person name="Van Hul W."/>
            <person name="Kneissel M."/>
        </authorList>
    </citation>
    <scope>FUNCTION</scope>
    <scope>INTERACTION WITH SOST</scope>
    <scope>TISSUE SPECIFICITY</scope>
    <scope>VARIANTS SOST2 TRP-1170 AND SER-1186</scope>
    <scope>CHARACTERIZATION OF VARIANTS SOST2 TRP-1170 AND SER-1186</scope>
    <scope>IDENTIFICATION BY MASS SPECTROMETRY</scope>
</reference>
<reference key="7">
    <citation type="journal article" date="2014" name="Hum. Mol. Genet.">
        <title>LRP4 third beta-propeller domain mutations cause novel congenital myasthenia by compromising agrin-mediated MuSK signaling in a position-specific manner.</title>
        <authorList>
            <person name="Ohkawara B."/>
            <person name="Cabrera-Serrano M."/>
            <person name="Nakata T."/>
            <person name="Milone M."/>
            <person name="Asai N."/>
            <person name="Ito K."/>
            <person name="Ito M."/>
            <person name="Masuda A."/>
            <person name="Ito Y."/>
            <person name="Engel A.G."/>
            <person name="Ohno K."/>
        </authorList>
    </citation>
    <scope>INVOLVEMENT IN CMS17</scope>
    <scope>VARIANTS SOST2 TRP-1170 AND SER-1186</scope>
    <scope>VARIANTS CMS17 LYS-1233 AND HIS-1277</scope>
    <scope>CHARACTERIZATION OF VARIANTS SOST2 TRP-1170 AND SER-1186</scope>
    <scope>CHARACTERIZATION OF VARIANTS CMS17 LYS-1233 AND HIS-1277</scope>
    <scope>MUTAGENESIS OF ASN-1214; VAL-1252; TYR-1256 AND ILE-1287</scope>
</reference>
<sequence>MRRQWGALLLGALLCAHGLASSPECACGRSHFTCAVSALGECTCIPAQWQCDGDNDCGDHSDEDGCILPTCSPLDFHCDNGKCIRRSWVCDGDNDCEDDSDEQDCPPRECEEDEFPCQNGYCIRSLWHCDGDNDCGDNSDEQCDMRKCSDKEFRCSDGSCIAEHWYCDGDTDCKDGSDEENCPSAVPAPPCNLEEFQCAYGRCILDIYHCDGDDDCGDWSDESDCSSHQPCRSGEFMCDSGLCINAGWRCDGDADCDDQSDERNCTTSMCTAEQFRCHSGRCVRLSWRCDGEDDCADNSDEENCENTGSPQCALDQFLCWNGRCIGQRKLCNGVNDCGDNSDESPQQNCRPRTGEENCNVNNGGCAQKCQMVRGAVQCTCHTGYRLTEDGHTCQDVNECAEEGYCSQGCTNSEGAFQCWCETGYELRPDRRSCKALGPEPVLLFANRIDIRQVLPHRSEYTLLLNNLENAIALDFHHRRELVFWSDVTLDRILRANLNGSNVEEVVSTGLESPGGLAVDWVHDKLYWTDSGTSRIEVANLDGAHRKVLLWQNLEKPRAIALHPMEGTIYWTDWGNTPRIEASSMDGSGRRIIADTHLFWPNGLTIDYAGRRMYWVDAKHHVIERANLDGSHRKAVISQGLPHPFAITVFEDSLYWTDWHTKSINSANKFTGKNQEIIRNKLHFPMDIHTLHPQRQPAGKNRCGDNNGGCTHLCLPSGQNYTCACPTGFRKISSHACAQSLDKFLLFARRMDIRRISFDTEDLSDDVIPLADVRSAVALDWDSRDDHVYWTDVSTDTISRAKWDGTGQEVVVDTSLESPAGLAIDWVTNKLYWTDAGTDRIEVANTDGSMRTVLIWENLDRPRDIVVEPMGGYMYWTDWGASPKIERAGMDASGRQVIISSNLTWPNGLAIDYGSQRLYWADAGMKTIEFAGLDGSKRKVLIGSQLPHPFGLTLYGERIYWTDWQTKSIQSADRLTGLDRETLQENLENLMDIHVFHRRRPPVSTPCAMENGGCSHLCLRSPNPSGFSCTCPTGINLLSDGKTCSPGMNSFLIFARRIDIRMVSLDIPYFADVVVPINITMKNTIAIGVDPQEGKVYWSDSTLHRISRANLDGSQHEDIITTGLQTTDGLAVDAIGRKVYWTDTGTNRIEVGNLDGSMRKVLVWQNLDSPRAIVLYHEMGFMYWTDWGENAKLERSGMDGSDRAVLINNNLGWPNGLTVDKASSQLLWADAHTERIEAADLNGANRHTLVSPVQHPYGLTLLDSYIYWTDWQTRSIHRADKGTGSNVILVRSNLPGLMDMQAVDRAQPLGFNKCGSRNGGCSHLCLPRPSGFSCACPTGIQLKGDGKTCDPSPETYLLFSSRGSIRRISLDTSDHTDVHVPVPELNNVISLDYDSVDGKVYYTDVFLDVIRRADLNGSNMETVIGRGLKTTDGLAVDWVARNLYWTDTGRNTIEASRLDGSCRKVLINNSLDEPRAIAVFPRKGYLFWTDWGHIAKIERANLDGSERKVLINTDLGWPNGLTLDYDTRRIYWVDAHLDRIESADLNGKLRQVLVSHVSHPFALTQQDRWIYWTDWQTKSIQRVDKYSGRNKETVLANVEGLMDIIVVSPQRQTGTNACGVNNGGCTHLCFARASDFVCACPDEPDSRPCSLVPGLVPPAPRATGMSEKSPVLPNTPPTTLYSSTTRTRTSLEEVEGRCSERDARLGLCARSNDAVPAAPGEGLHISYAIGGLLSILLILVVIAALMLYRHKKSKFTDPGMGNLTYSNPSYRTSTQEVKIEAIPKPAMYNQLCYKKEGGPDHNYTKEKIKIVEGICLLSGDDAEWDDLKQLRSSRGGLLRDHVCMKTDTVSIQASSGSLDDTETEQLLQEEQSECSSVHTAATPERRGSLPDTGWKHERKLSSESQV</sequence>
<comment type="function">
    <text evidence="1 6 7">Mediates SOST-dependent inhibition of bone formation. Functions as a specific facilitator of SOST-mediated inhibition of Wnt signaling. Plays a key role in the formation and the maintenance of the neuromuscular junction (NMJ), the synapse between motor neuron and skeletal muscle. Directly binds AGRIN and recruits it to the MUSK signaling complex. Mediates the AGRIN-induced phosphorylation of MUSK, the kinase of the complex. The activation of MUSK in myotubes induces the formation of NMJ by regulating different processes including the transcription of specific genes and the clustering of AChR in the postsynaptic membrane. Alternatively, may be involved in the negative regulation of the canonical Wnt signaling pathway, being able to antagonize the LRP6-mediated activation of this pathway. More generally, has been proposed to function as a cell surface endocytic receptor binding and internalizing extracellular ligands for degradation by lysosomes. May play an essential role in the process of digit differentiation (By similarity).</text>
</comment>
<comment type="subunit">
    <text evidence="1 7">Homooligomer. Interacts with MUSK; the heterodimer forms an AGRIN receptor complex that binds AGRIN resulting in activation of MUSK (By similarity). Interacts (via the extracellular domain) with SOST; the interaction facilitates the inhibition of Wnt signaling (PubMed:21471202). Interacts with MESD; the interaction promotes glycosylation of LRP4 and its cell-surface expression (By similarity).</text>
</comment>
<comment type="interaction">
    <interactant intactId="EBI-310873">
        <id>O75096</id>
    </interactant>
    <interactant intactId="EBI-5746563">
        <id>Q9BQB4</id>
        <label>SOST</label>
    </interactant>
    <organismsDiffer>false</organismsDiffer>
    <experiments>6</experiments>
</comment>
<comment type="subcellular location">
    <subcellularLocation>
        <location evidence="1">Cell membrane</location>
        <topology evidence="2">Single-pass type I membrane protein</topology>
    </subcellularLocation>
</comment>
<comment type="tissue specificity">
    <text evidence="7">Expressed in bone; present in osteoblasts and osteocytes. No expression is observed in osteoclast. Expressed in several regions of the brain.</text>
</comment>
<comment type="disease" evidence="6">
    <disease id="DI-02834">
        <name>Cenani-Lenz syndactyly syndrome</name>
        <acronym>CLSS</acronym>
        <description>A congenital malformation syndrome defined as complete and complex syndactyly of the hands combined with malformations of the forearm bones and similar manifestations in the lower limbs. It is characterized by fusion and disorganization of metacarpal and phalangeal bones, radius and ulnar shortening, radioulnar synostosis, and severe syndactyly of hands and feet.</description>
        <dbReference type="MIM" id="212780"/>
    </disease>
    <text>The disease is caused by variants affecting the gene represented in this entry.</text>
</comment>
<comment type="disease" evidence="7 8">
    <disease id="DI-03282">
        <name>Sclerosteosis 2</name>
        <acronym>SOST2</acronym>
        <description>A sclerosing bone dysplasia characterized by a generalized hyperostosis and sclerosis leading to a markedly thickened skull, with mandible, ribs, clavicles and all long bones also being affected. Due to narrowing of the foramina of the cranial nerves, facial nerve palsy, hearing loss and atrophy of the optic nerves can occur. Sclerosteosis is clinically and radiologically very similar to van Buchem disease, mainly differentiated by hand malformations and a large stature in sclerosteosis patients.</description>
        <dbReference type="MIM" id="614305"/>
    </disease>
    <text>The disease is caused by variants affecting the gene represented in this entry.</text>
</comment>
<comment type="disease" evidence="8">
    <disease id="DI-04402">
        <name>Myasthenic syndrome, congenital, 17</name>
        <acronym>CMS17</acronym>
        <description>A form of congenital myasthenic syndrome, a group of disorders characterized by failure of neuromuscular transmission, including pre-synaptic, synaptic, and post-synaptic disorders that are not of autoimmune origin. Clinical features are easy fatigability and muscle weakness affecting the axial and limb muscles (with hypotonia in early-onset forms), the ocular muscles (leading to ptosis and ophthalmoplegia), and the facial and bulbar musculature (affecting sucking and swallowing, and leading to dysphonia). The symptoms fluctuate and worsen with physical effort.</description>
        <dbReference type="MIM" id="616304"/>
    </disease>
    <text>The disease is caused by variants affecting the gene represented in this entry.</text>
</comment>
<comment type="similarity">
    <text evidence="11">Belongs to the LDLR family.</text>
</comment>
<comment type="sequence caution" evidence="11">
    <conflict type="erroneous initiation">
        <sequence resource="EMBL-CDS" id="BAE19679"/>
    </conflict>
    <text>Extended N-terminus.</text>
</comment>